<feature type="transit peptide" description="Chloroplast" evidence="1">
    <location>
        <begin position="1"/>
        <end position="78"/>
    </location>
</feature>
<feature type="chain" id="PRO_0000397230" description="Oxygen-evolving enhancer protein 2, chloroplastic" evidence="1">
    <location>
        <begin position="79"/>
        <end position="263"/>
    </location>
</feature>
<feature type="region of interest" description="Disordered" evidence="2">
    <location>
        <begin position="14"/>
        <end position="34"/>
    </location>
</feature>
<feature type="compositionally biased region" description="Low complexity" evidence="2">
    <location>
        <begin position="14"/>
        <end position="30"/>
    </location>
</feature>
<dbReference type="EMBL" id="DY925816">
    <property type="status" value="NOT_ANNOTATED_CDS"/>
    <property type="molecule type" value="mRNA"/>
</dbReference>
<dbReference type="EMBL" id="DY925843">
    <property type="status" value="NOT_ANNOTATED_CDS"/>
    <property type="molecule type" value="mRNA"/>
</dbReference>
<dbReference type="SMR" id="P85189"/>
<dbReference type="GO" id="GO:0009535">
    <property type="term" value="C:chloroplast thylakoid membrane"/>
    <property type="evidence" value="ECO:0007669"/>
    <property type="project" value="UniProtKB-SubCell"/>
</dbReference>
<dbReference type="GO" id="GO:0019898">
    <property type="term" value="C:extrinsic component of membrane"/>
    <property type="evidence" value="ECO:0007669"/>
    <property type="project" value="InterPro"/>
</dbReference>
<dbReference type="GO" id="GO:0009654">
    <property type="term" value="C:photosystem II oxygen evolving complex"/>
    <property type="evidence" value="ECO:0007669"/>
    <property type="project" value="InterPro"/>
</dbReference>
<dbReference type="GO" id="GO:0005509">
    <property type="term" value="F:calcium ion binding"/>
    <property type="evidence" value="ECO:0007669"/>
    <property type="project" value="InterPro"/>
</dbReference>
<dbReference type="GO" id="GO:0015979">
    <property type="term" value="P:photosynthesis"/>
    <property type="evidence" value="ECO:0007669"/>
    <property type="project" value="UniProtKB-KW"/>
</dbReference>
<dbReference type="Gene3D" id="3.40.1000.10">
    <property type="entry name" value="Mog1/PsbP, alpha/beta/alpha sandwich"/>
    <property type="match status" value="1"/>
</dbReference>
<dbReference type="InterPro" id="IPR016123">
    <property type="entry name" value="Mog1/PsbP_a/b/a-sand"/>
</dbReference>
<dbReference type="InterPro" id="IPR002683">
    <property type="entry name" value="PsbP_C"/>
</dbReference>
<dbReference type="PANTHER" id="PTHR31407">
    <property type="match status" value="1"/>
</dbReference>
<dbReference type="PANTHER" id="PTHR31407:SF6">
    <property type="entry name" value="OXYGEN-EVOLVING ENHANCER PROTEIN 2-1, CHLOROPLASTIC"/>
    <property type="match status" value="1"/>
</dbReference>
<dbReference type="Pfam" id="PF01789">
    <property type="entry name" value="PsbP"/>
    <property type="match status" value="1"/>
</dbReference>
<dbReference type="SUPFAM" id="SSF55724">
    <property type="entry name" value="Mog1p/PsbP-like"/>
    <property type="match status" value="1"/>
</dbReference>
<proteinExistence type="evidence at protein level"/>
<gene>
    <name evidence="1" type="primary">PSBP</name>
</gene>
<accession>P85189</accession>
<name>PSBP_HELAN</name>
<keyword id="KW-0150">Chloroplast</keyword>
<keyword id="KW-0472">Membrane</keyword>
<keyword id="KW-0602">Photosynthesis</keyword>
<keyword id="KW-0604">Photosystem II</keyword>
<keyword id="KW-0934">Plastid</keyword>
<keyword id="KW-0793">Thylakoid</keyword>
<keyword id="KW-0809">Transit peptide</keyword>
<comment type="function">
    <text evidence="1">May be involved in the regulation of photosystem II.</text>
</comment>
<comment type="subcellular location">
    <subcellularLocation>
        <location evidence="1">Plastid</location>
        <location evidence="1">Chloroplast thylakoid membrane</location>
    </subcellularLocation>
    <text evidence="1">Associated with the photosystem II complex.</text>
</comment>
<comment type="induction">
    <text evidence="4">Down-regulated in response to mixed metal ion contamination (cadmium, copper, lead and zinc), but not in response to zinc ion contamination.</text>
</comment>
<comment type="similarity">
    <text evidence="5">Belongs to the PsbP family.</text>
</comment>
<protein>
    <recommendedName>
        <fullName evidence="1">Oxygen-evolving enhancer protein 2, chloroplastic</fullName>
        <shortName evidence="1">OEE2</shortName>
    </recommendedName>
    <alternativeName>
        <fullName evidence="1">23 kDa subunit of oxygen evolving system of photosystem II</fullName>
    </alternativeName>
    <alternativeName>
        <fullName evidence="1">23 kDa thylakoid membrane protein</fullName>
    </alternativeName>
    <alternativeName>
        <fullName evidence="1">OEC 23 kDa subunit</fullName>
    </alternativeName>
</protein>
<reference evidence="5" key="1">
    <citation type="submission" date="2006-03" db="EMBL/GenBank/DDBJ databases">
        <title>Sunflower (Helianthus annuus) ESTs (set 2) from the compositae genome project http://compgenomics.ucdavis.edu/.</title>
        <authorList>
            <person name="Michelmore R.W."/>
            <person name="Knapp S."/>
            <person name="Rieseberg L."/>
            <person name="Bradford K."/>
            <person name="Kesseli R."/>
            <person name="Boore J."/>
            <person name="Kozik A."/>
            <person name="Matvienko M."/>
            <person name="Lavelle D."/>
            <person name="Lai Z."/>
        </authorList>
    </citation>
    <scope>NUCLEOTIDE SEQUENCE [LARGE SCALE MRNA]</scope>
    <source>
        <strain evidence="3">cv. ANN1312</strain>
    </source>
</reference>
<reference evidence="5" key="2">
    <citation type="journal article" date="2009" name="Metallomics">
        <title>Evaluation of metal-ion stress in sunflower (Heliantus annus L.) leaves through proteomic changes.</title>
        <authorList>
            <person name="Garcia J.S."/>
            <person name="Souza G.H.M.F."/>
            <person name="Eberlin M.N."/>
            <person name="Arruda M.A.Z."/>
        </authorList>
    </citation>
    <scope>IDENTIFICATION BY MASS SPECTROMETRY</scope>
    <scope>INDUCTION</scope>
</reference>
<evidence type="ECO:0000250" key="1">
    <source>
        <dbReference type="UniProtKB" id="P12302"/>
    </source>
</evidence>
<evidence type="ECO:0000256" key="2">
    <source>
        <dbReference type="SAM" id="MobiDB-lite"/>
    </source>
</evidence>
<evidence type="ECO:0000269" key="3">
    <source ref="1"/>
</evidence>
<evidence type="ECO:0000269" key="4">
    <source ref="2"/>
</evidence>
<evidence type="ECO:0000305" key="5"/>
<organism>
    <name type="scientific">Helianthus annuus</name>
    <name type="common">Common sunflower</name>
    <dbReference type="NCBI Taxonomy" id="4232"/>
    <lineage>
        <taxon>Eukaryota</taxon>
        <taxon>Viridiplantae</taxon>
        <taxon>Streptophyta</taxon>
        <taxon>Embryophyta</taxon>
        <taxon>Tracheophyta</taxon>
        <taxon>Spermatophyta</taxon>
        <taxon>Magnoliopsida</taxon>
        <taxon>eudicotyledons</taxon>
        <taxon>Gunneridae</taxon>
        <taxon>Pentapetalae</taxon>
        <taxon>asterids</taxon>
        <taxon>campanulids</taxon>
        <taxon>Asterales</taxon>
        <taxon>Asteraceae</taxon>
        <taxon>Asteroideae</taxon>
        <taxon>Heliantheae alliance</taxon>
        <taxon>Heliantheae</taxon>
        <taxon>Helianthus</taxon>
    </lineage>
</organism>
<sequence>MAAASCFHALSTPARSSSSSLQSSSSRLPAPIKPNQLIIRSQKREETATNDAAISRRLALTVLIGAAAVGTKVSPADAAYGEAANVFGKQKSTEFSQYTGPGFKLSVPAKWNPSKEVEYPGQVLRYEDNFDTTSNLAVMVTPTDKKAITDYGAPEEFLSKVDYLLGKQAYFGKTASEGGFEQDAVATANILEVATPTVDGKQYYFLSVLTRTADGDEGGKHQLISATVSDGKLYICKAQAGDKRWFKGARKYVEGSTSFISVA</sequence>